<organism>
    <name type="scientific">Shewanella woodyi (strain ATCC 51908 / MS32)</name>
    <dbReference type="NCBI Taxonomy" id="392500"/>
    <lineage>
        <taxon>Bacteria</taxon>
        <taxon>Pseudomonadati</taxon>
        <taxon>Pseudomonadota</taxon>
        <taxon>Gammaproteobacteria</taxon>
        <taxon>Alteromonadales</taxon>
        <taxon>Shewanellaceae</taxon>
        <taxon>Shewanella</taxon>
    </lineage>
</organism>
<accession>B1KHY4</accession>
<dbReference type="EC" id="5.1.1.1" evidence="1"/>
<dbReference type="EMBL" id="CP000961">
    <property type="protein sequence ID" value="ACA88462.1"/>
    <property type="molecule type" value="Genomic_DNA"/>
</dbReference>
<dbReference type="RefSeq" id="WP_012326791.1">
    <property type="nucleotide sequence ID" value="NC_010506.1"/>
</dbReference>
<dbReference type="SMR" id="B1KHY4"/>
<dbReference type="STRING" id="392500.Swoo_4206"/>
<dbReference type="KEGG" id="swd:Swoo_4206"/>
<dbReference type="eggNOG" id="COG0787">
    <property type="taxonomic scope" value="Bacteria"/>
</dbReference>
<dbReference type="HOGENOM" id="CLU_028393_1_0_6"/>
<dbReference type="UniPathway" id="UPA00042">
    <property type="reaction ID" value="UER00497"/>
</dbReference>
<dbReference type="Proteomes" id="UP000002168">
    <property type="component" value="Chromosome"/>
</dbReference>
<dbReference type="GO" id="GO:0005829">
    <property type="term" value="C:cytosol"/>
    <property type="evidence" value="ECO:0007669"/>
    <property type="project" value="TreeGrafter"/>
</dbReference>
<dbReference type="GO" id="GO:0008784">
    <property type="term" value="F:alanine racemase activity"/>
    <property type="evidence" value="ECO:0007669"/>
    <property type="project" value="UniProtKB-UniRule"/>
</dbReference>
<dbReference type="GO" id="GO:0030170">
    <property type="term" value="F:pyridoxal phosphate binding"/>
    <property type="evidence" value="ECO:0007669"/>
    <property type="project" value="UniProtKB-UniRule"/>
</dbReference>
<dbReference type="GO" id="GO:0030632">
    <property type="term" value="P:D-alanine biosynthetic process"/>
    <property type="evidence" value="ECO:0007669"/>
    <property type="project" value="UniProtKB-UniRule"/>
</dbReference>
<dbReference type="CDD" id="cd06827">
    <property type="entry name" value="PLPDE_III_AR_proteobact"/>
    <property type="match status" value="1"/>
</dbReference>
<dbReference type="FunFam" id="2.40.37.10:FF:000002">
    <property type="entry name" value="Alanine racemase"/>
    <property type="match status" value="1"/>
</dbReference>
<dbReference type="FunFam" id="3.20.20.10:FF:000002">
    <property type="entry name" value="Alanine racemase"/>
    <property type="match status" value="1"/>
</dbReference>
<dbReference type="Gene3D" id="3.20.20.10">
    <property type="entry name" value="Alanine racemase"/>
    <property type="match status" value="1"/>
</dbReference>
<dbReference type="Gene3D" id="2.40.37.10">
    <property type="entry name" value="Lyase, Ornithine Decarboxylase, Chain A, domain 1"/>
    <property type="match status" value="1"/>
</dbReference>
<dbReference type="HAMAP" id="MF_01201">
    <property type="entry name" value="Ala_racemase"/>
    <property type="match status" value="1"/>
</dbReference>
<dbReference type="InterPro" id="IPR000821">
    <property type="entry name" value="Ala_racemase"/>
</dbReference>
<dbReference type="InterPro" id="IPR009006">
    <property type="entry name" value="Ala_racemase/Decarboxylase_C"/>
</dbReference>
<dbReference type="InterPro" id="IPR011079">
    <property type="entry name" value="Ala_racemase_C"/>
</dbReference>
<dbReference type="InterPro" id="IPR001608">
    <property type="entry name" value="Ala_racemase_N"/>
</dbReference>
<dbReference type="InterPro" id="IPR020622">
    <property type="entry name" value="Ala_racemase_pyridoxalP-BS"/>
</dbReference>
<dbReference type="InterPro" id="IPR029066">
    <property type="entry name" value="PLP-binding_barrel"/>
</dbReference>
<dbReference type="NCBIfam" id="TIGR00492">
    <property type="entry name" value="alr"/>
    <property type="match status" value="1"/>
</dbReference>
<dbReference type="PANTHER" id="PTHR30511">
    <property type="entry name" value="ALANINE RACEMASE"/>
    <property type="match status" value="1"/>
</dbReference>
<dbReference type="PANTHER" id="PTHR30511:SF4">
    <property type="entry name" value="ALANINE RACEMASE, BIOSYNTHETIC"/>
    <property type="match status" value="1"/>
</dbReference>
<dbReference type="Pfam" id="PF00842">
    <property type="entry name" value="Ala_racemase_C"/>
    <property type="match status" value="1"/>
</dbReference>
<dbReference type="Pfam" id="PF01168">
    <property type="entry name" value="Ala_racemase_N"/>
    <property type="match status" value="1"/>
</dbReference>
<dbReference type="PRINTS" id="PR00992">
    <property type="entry name" value="ALARACEMASE"/>
</dbReference>
<dbReference type="SMART" id="SM01005">
    <property type="entry name" value="Ala_racemase_C"/>
    <property type="match status" value="1"/>
</dbReference>
<dbReference type="SUPFAM" id="SSF50621">
    <property type="entry name" value="Alanine racemase C-terminal domain-like"/>
    <property type="match status" value="1"/>
</dbReference>
<dbReference type="SUPFAM" id="SSF51419">
    <property type="entry name" value="PLP-binding barrel"/>
    <property type="match status" value="1"/>
</dbReference>
<dbReference type="PROSITE" id="PS00395">
    <property type="entry name" value="ALANINE_RACEMASE"/>
    <property type="match status" value="1"/>
</dbReference>
<evidence type="ECO:0000255" key="1">
    <source>
        <dbReference type="HAMAP-Rule" id="MF_01201"/>
    </source>
</evidence>
<feature type="chain" id="PRO_1000164625" description="Alanine racemase">
    <location>
        <begin position="1"/>
        <end position="358"/>
    </location>
</feature>
<feature type="active site" description="Proton acceptor; specific for D-alanine" evidence="1">
    <location>
        <position position="35"/>
    </location>
</feature>
<feature type="active site" description="Proton acceptor; specific for L-alanine" evidence="1">
    <location>
        <position position="255"/>
    </location>
</feature>
<feature type="binding site" evidence="1">
    <location>
        <position position="130"/>
    </location>
    <ligand>
        <name>substrate</name>
    </ligand>
</feature>
<feature type="binding site" evidence="1">
    <location>
        <position position="303"/>
    </location>
    <ligand>
        <name>substrate</name>
    </ligand>
</feature>
<feature type="modified residue" description="N6-(pyridoxal phosphate)lysine" evidence="1">
    <location>
        <position position="35"/>
    </location>
</feature>
<sequence>MKPFPRAEISAQALKNNLSRLRQIAPNSSVMAVVKANGYGHGLLNVASCLTEADGFGLARLEEALALRAGGVKAKLVLLEGFFRQVDLTTLVEHGIDTVIHNEVQLDMLENASLSKPVTVWLKLDSGMHRLGFTPEQFAQVYARLEACPQVAKPINIMSHFACADEPDNPMTQEQLQVFEALTKNSKGYRTLANSAGTLYWPDSQADWIRPGIALYGVSPVIGDLGRNHGLEPAMKLVSQLIAVREHKAGQPVGYGCFWHAKADTRLGVVAIGYGDGYPRNAPEGTPVWVNGRRVPVVGRVSMDMLTVDLGIDAKDSIGDDVVLWGKELPVEEVAEHIGTIAYELVTKLTPRVAVCLD</sequence>
<reference key="1">
    <citation type="submission" date="2008-02" db="EMBL/GenBank/DDBJ databases">
        <title>Complete sequence of Shewanella woodyi ATCC 51908.</title>
        <authorList>
            <consortium name="US DOE Joint Genome Institute"/>
            <person name="Copeland A."/>
            <person name="Lucas S."/>
            <person name="Lapidus A."/>
            <person name="Glavina del Rio T."/>
            <person name="Dalin E."/>
            <person name="Tice H."/>
            <person name="Bruce D."/>
            <person name="Goodwin L."/>
            <person name="Pitluck S."/>
            <person name="Sims D."/>
            <person name="Brettin T."/>
            <person name="Detter J.C."/>
            <person name="Han C."/>
            <person name="Kuske C.R."/>
            <person name="Schmutz J."/>
            <person name="Larimer F."/>
            <person name="Land M."/>
            <person name="Hauser L."/>
            <person name="Kyrpides N."/>
            <person name="Lykidis A."/>
            <person name="Zhao J.-S."/>
            <person name="Richardson P."/>
        </authorList>
    </citation>
    <scope>NUCLEOTIDE SEQUENCE [LARGE SCALE GENOMIC DNA]</scope>
    <source>
        <strain>ATCC 51908 / MS32</strain>
    </source>
</reference>
<comment type="function">
    <text evidence="1">Catalyzes the interconversion of L-alanine and D-alanine. May also act on other amino acids.</text>
</comment>
<comment type="catalytic activity">
    <reaction evidence="1">
        <text>L-alanine = D-alanine</text>
        <dbReference type="Rhea" id="RHEA:20249"/>
        <dbReference type="ChEBI" id="CHEBI:57416"/>
        <dbReference type="ChEBI" id="CHEBI:57972"/>
        <dbReference type="EC" id="5.1.1.1"/>
    </reaction>
</comment>
<comment type="cofactor">
    <cofactor evidence="1">
        <name>pyridoxal 5'-phosphate</name>
        <dbReference type="ChEBI" id="CHEBI:597326"/>
    </cofactor>
</comment>
<comment type="pathway">
    <text evidence="1">Amino-acid biosynthesis; D-alanine biosynthesis; D-alanine from L-alanine: step 1/1.</text>
</comment>
<comment type="similarity">
    <text evidence="1">Belongs to the alanine racemase family.</text>
</comment>
<proteinExistence type="inferred from homology"/>
<protein>
    <recommendedName>
        <fullName evidence="1">Alanine racemase</fullName>
        <ecNumber evidence="1">5.1.1.1</ecNumber>
    </recommendedName>
</protein>
<keyword id="KW-0413">Isomerase</keyword>
<keyword id="KW-0663">Pyridoxal phosphate</keyword>
<keyword id="KW-1185">Reference proteome</keyword>
<name>ALR_SHEWM</name>
<gene>
    <name type="primary">alr</name>
    <name type="ordered locus">Swoo_4206</name>
</gene>